<proteinExistence type="evidence at protein level"/>
<protein>
    <recommendedName>
        <fullName evidence="4">Alpha-defensin PhD-4</fullName>
    </recommendedName>
</protein>
<reference evidence="5" key="1">
    <citation type="journal article" date="2010" name="Rapid Commun. Mass Spectrom.">
        <title>De novo sequencing of two new cyclic theta-defensins from baboon (Papio hamadryas) leukocytes by matrix-assisted laser desorption/ionization mass spectrometry.</title>
        <authorList>
            <person name="Stegemann C."/>
            <person name="Tsvetkova E.V."/>
            <person name="Aleshina G.M."/>
            <person name="Lehrer R.I."/>
            <person name="Kokryakov V.N."/>
            <person name="Hoffmann R."/>
        </authorList>
    </citation>
    <scope>PROTEIN SEQUENCE</scope>
    <scope>FUNCTION</scope>
    <scope>MASS SPECTROMETRY</scope>
    <source>
        <tissue evidence="3">Leukocyte</tissue>
    </source>
</reference>
<accession>P86724</accession>
<organism>
    <name type="scientific">Papio hamadryas</name>
    <name type="common">Hamadryas baboon</name>
    <dbReference type="NCBI Taxonomy" id="9557"/>
    <lineage>
        <taxon>Eukaryota</taxon>
        <taxon>Metazoa</taxon>
        <taxon>Chordata</taxon>
        <taxon>Craniata</taxon>
        <taxon>Vertebrata</taxon>
        <taxon>Euteleostomi</taxon>
        <taxon>Mammalia</taxon>
        <taxon>Eutheria</taxon>
        <taxon>Euarchontoglires</taxon>
        <taxon>Primates</taxon>
        <taxon>Haplorrhini</taxon>
        <taxon>Catarrhini</taxon>
        <taxon>Cercopithecidae</taxon>
        <taxon>Cercopithecinae</taxon>
        <taxon>Papio</taxon>
    </lineage>
</organism>
<keyword id="KW-0044">Antibiotic</keyword>
<keyword id="KW-0929">Antimicrobial</keyword>
<keyword id="KW-0211">Defensin</keyword>
<keyword id="KW-0903">Direct protein sequencing</keyword>
<keyword id="KW-1015">Disulfide bond</keyword>
<keyword id="KW-0295">Fungicide</keyword>
<keyword id="KW-0964">Secreted</keyword>
<comment type="function">
    <text evidence="3">In low salt conditions, has antibacterial activity against the Gram-negative bacterium E.coli ML35p (MIC=2.4 uM), the Gram-positive bacteria L.monocytogenes EGD (MIC=2.2 uM) and methicillin-resistant S.aureus ATCC 33591 (MIC=3.5 uM), and the fungus C.albicans 820 (MIC=3.9 uM). At high physiological salt concentrations the antimicrobial activity decreases significantly: E.coli ML35p (MIC=7.1 uM), L.monocytogenes EGD (MIC=1.8 uM), S.aureus ATCC 33591 (MIC=&gt;50 uM), and C.albicans 820 (MIC=&gt;50 uM).</text>
</comment>
<comment type="subcellular location">
    <subcellularLocation>
        <location evidence="1">Secreted</location>
    </subcellularLocation>
</comment>
<comment type="mass spectrometry"/>
<comment type="similarity">
    <text evidence="2">Belongs to the alpha-defensin family.</text>
</comment>
<name>DEF4_PAPHA</name>
<feature type="peptide" id="PRO_0000399454" description="Alpha-defensin PhD-4" evidence="3">
    <location>
        <begin position="1"/>
        <end position="30"/>
    </location>
</feature>
<feature type="disulfide bond" evidence="1">
    <location>
        <begin position="2"/>
        <end position="30"/>
    </location>
</feature>
<feature type="disulfide bond" evidence="1">
    <location>
        <begin position="4"/>
        <end position="19"/>
    </location>
</feature>
<feature type="disulfide bond" evidence="1">
    <location>
        <begin position="9"/>
        <end position="29"/>
    </location>
</feature>
<evidence type="ECO:0000250" key="1">
    <source>
        <dbReference type="UniProtKB" id="P59665"/>
    </source>
</evidence>
<evidence type="ECO:0000255" key="2"/>
<evidence type="ECO:0000269" key="3">
    <source>
    </source>
</evidence>
<evidence type="ECO:0000303" key="4">
    <source>
    </source>
</evidence>
<evidence type="ECO:0000305" key="5"/>
<dbReference type="SMR" id="P86724"/>
<dbReference type="GO" id="GO:0005576">
    <property type="term" value="C:extracellular region"/>
    <property type="evidence" value="ECO:0007669"/>
    <property type="project" value="UniProtKB-SubCell"/>
</dbReference>
<dbReference type="GO" id="GO:0042742">
    <property type="term" value="P:defense response to bacterium"/>
    <property type="evidence" value="ECO:0007669"/>
    <property type="project" value="UniProtKB-KW"/>
</dbReference>
<dbReference type="GO" id="GO:0050832">
    <property type="term" value="P:defense response to fungus"/>
    <property type="evidence" value="ECO:0007669"/>
    <property type="project" value="UniProtKB-KW"/>
</dbReference>
<dbReference type="GO" id="GO:0031640">
    <property type="term" value="P:killing of cells of another organism"/>
    <property type="evidence" value="ECO:0007669"/>
    <property type="project" value="UniProtKB-KW"/>
</dbReference>
<dbReference type="InterPro" id="IPR006081">
    <property type="entry name" value="Alpha-defensin_C"/>
</dbReference>
<dbReference type="InterPro" id="IPR006080">
    <property type="entry name" value="Beta/alpha-defensin_C"/>
</dbReference>
<dbReference type="Pfam" id="PF00323">
    <property type="entry name" value="Defensin_1"/>
    <property type="match status" value="1"/>
</dbReference>
<dbReference type="SMART" id="SM00048">
    <property type="entry name" value="DEFSN"/>
    <property type="match status" value="1"/>
</dbReference>
<dbReference type="SUPFAM" id="SSF57392">
    <property type="entry name" value="Defensin-like"/>
    <property type="match status" value="1"/>
</dbReference>
<dbReference type="PROSITE" id="PS00269">
    <property type="entry name" value="DEFENSIN"/>
    <property type="match status" value="1"/>
</dbReference>
<sequence>ACYCRIPACFAGERRYGTCFYLGRVWAFCC</sequence>